<sequence>MAELATRVQELHHLLNKYSHEYYVQDNPSVPDSEYDKLLRELIDIENAHPEYKTEDSPTVRVGGEAQATFNKVRHDTPMLSLGNAFNEEELRRFDARVREKAGKVEYMCELKIDGLAVSLKYENGRFVQGLTRGDGTIGEDITANLRTIRAIPLRINKPLTFEVRGEAYMPKKSFEHLNQQKEEAGEQAFANPRNAAAGSLRQLDSKLAAKRRLSIFLYSVNDFTNFHAESQSEALDELDELGFKTNQNRKRVSDIDGVLEYIKYWTAHREELPYDIDGIVIKVNDLEEQEELGYTQKSPRWAIAYKFPAEEVVTKLLDIELSIGRTGVVTPTAVLEPVRVAGTTVSRASLHNEDLIHEKDIRIGDSVVIKKAGDIIPEVIRSLPDRRPEGTEPYHMPTHCPSCGHELVRLDGEVALRCINPKCPAQLVEGMIHFVSRQAMNIDGLGTKIIMQLYENEIIKDVGDLYYLTKDDLLPLERMGEKKADNLLNAIEASKKNSLEHLLFGLGIRHLGVKASQVIAERFETMDRLFKVTEEELLEIHDIGDKLATSLITYLNNKDIIALIEKLRRKNVNMTYEGIKTSEIQTDSEFNGKTVVLTGKLHNMTRTEASKWLEAQGAKTTSSVTKNTDLVIAGEDAGSKLTKAEKLGTEVWSEDEFIQKQKEVENK</sequence>
<organism>
    <name type="scientific">Staphylococcus carnosus (strain TM300)</name>
    <dbReference type="NCBI Taxonomy" id="396513"/>
    <lineage>
        <taxon>Bacteria</taxon>
        <taxon>Bacillati</taxon>
        <taxon>Bacillota</taxon>
        <taxon>Bacilli</taxon>
        <taxon>Bacillales</taxon>
        <taxon>Staphylococcaceae</taxon>
        <taxon>Staphylococcus</taxon>
    </lineage>
</organism>
<keyword id="KW-0227">DNA damage</keyword>
<keyword id="KW-0234">DNA repair</keyword>
<keyword id="KW-0235">DNA replication</keyword>
<keyword id="KW-0436">Ligase</keyword>
<keyword id="KW-0460">Magnesium</keyword>
<keyword id="KW-0464">Manganese</keyword>
<keyword id="KW-0479">Metal-binding</keyword>
<keyword id="KW-0520">NAD</keyword>
<keyword id="KW-1185">Reference proteome</keyword>
<keyword id="KW-0862">Zinc</keyword>
<evidence type="ECO:0000255" key="1">
    <source>
        <dbReference type="HAMAP-Rule" id="MF_01588"/>
    </source>
</evidence>
<comment type="function">
    <text evidence="1">DNA ligase that catalyzes the formation of phosphodiester linkages between 5'-phosphoryl and 3'-hydroxyl groups in double-stranded DNA using NAD as a coenzyme and as the energy source for the reaction. It is essential for DNA replication and repair of damaged DNA.</text>
</comment>
<comment type="catalytic activity">
    <reaction evidence="1">
        <text>NAD(+) + (deoxyribonucleotide)n-3'-hydroxyl + 5'-phospho-(deoxyribonucleotide)m = (deoxyribonucleotide)n+m + AMP + beta-nicotinamide D-nucleotide.</text>
        <dbReference type="EC" id="6.5.1.2"/>
    </reaction>
</comment>
<comment type="cofactor">
    <cofactor evidence="1">
        <name>Mg(2+)</name>
        <dbReference type="ChEBI" id="CHEBI:18420"/>
    </cofactor>
    <cofactor evidence="1">
        <name>Mn(2+)</name>
        <dbReference type="ChEBI" id="CHEBI:29035"/>
    </cofactor>
</comment>
<comment type="similarity">
    <text evidence="1">Belongs to the NAD-dependent DNA ligase family. LigA subfamily.</text>
</comment>
<reference key="1">
    <citation type="journal article" date="2009" name="Appl. Environ. Microbiol.">
        <title>Genome analysis of the meat starter culture bacterium Staphylococcus carnosus TM300.</title>
        <authorList>
            <person name="Rosenstein R."/>
            <person name="Nerz C."/>
            <person name="Biswas L."/>
            <person name="Resch A."/>
            <person name="Raddatz G."/>
            <person name="Schuster S.C."/>
            <person name="Goetz F."/>
        </authorList>
    </citation>
    <scope>NUCLEOTIDE SEQUENCE [LARGE SCALE GENOMIC DNA]</scope>
    <source>
        <strain>TM300</strain>
    </source>
</reference>
<proteinExistence type="inferred from homology"/>
<feature type="chain" id="PRO_0000380472" description="DNA ligase">
    <location>
        <begin position="1"/>
        <end position="668"/>
    </location>
</feature>
<feature type="domain" description="BRCT" evidence="1">
    <location>
        <begin position="586"/>
        <end position="668"/>
    </location>
</feature>
<feature type="active site" description="N6-AMP-lysine intermediate" evidence="1">
    <location>
        <position position="112"/>
    </location>
</feature>
<feature type="binding site" evidence="1">
    <location>
        <begin position="32"/>
        <end position="36"/>
    </location>
    <ligand>
        <name>NAD(+)</name>
        <dbReference type="ChEBI" id="CHEBI:57540"/>
    </ligand>
</feature>
<feature type="binding site" evidence="1">
    <location>
        <begin position="81"/>
        <end position="82"/>
    </location>
    <ligand>
        <name>NAD(+)</name>
        <dbReference type="ChEBI" id="CHEBI:57540"/>
    </ligand>
</feature>
<feature type="binding site" evidence="1">
    <location>
        <position position="110"/>
    </location>
    <ligand>
        <name>NAD(+)</name>
        <dbReference type="ChEBI" id="CHEBI:57540"/>
    </ligand>
</feature>
<feature type="binding site" evidence="1">
    <location>
        <position position="133"/>
    </location>
    <ligand>
        <name>NAD(+)</name>
        <dbReference type="ChEBI" id="CHEBI:57540"/>
    </ligand>
</feature>
<feature type="binding site" evidence="1">
    <location>
        <position position="167"/>
    </location>
    <ligand>
        <name>NAD(+)</name>
        <dbReference type="ChEBI" id="CHEBI:57540"/>
    </ligand>
</feature>
<feature type="binding site" evidence="1">
    <location>
        <position position="283"/>
    </location>
    <ligand>
        <name>NAD(+)</name>
        <dbReference type="ChEBI" id="CHEBI:57540"/>
    </ligand>
</feature>
<feature type="binding site" evidence="1">
    <location>
        <position position="307"/>
    </location>
    <ligand>
        <name>NAD(+)</name>
        <dbReference type="ChEBI" id="CHEBI:57540"/>
    </ligand>
</feature>
<feature type="binding site" evidence="1">
    <location>
        <position position="401"/>
    </location>
    <ligand>
        <name>Zn(2+)</name>
        <dbReference type="ChEBI" id="CHEBI:29105"/>
    </ligand>
</feature>
<feature type="binding site" evidence="1">
    <location>
        <position position="404"/>
    </location>
    <ligand>
        <name>Zn(2+)</name>
        <dbReference type="ChEBI" id="CHEBI:29105"/>
    </ligand>
</feature>
<feature type="binding site" evidence="1">
    <location>
        <position position="419"/>
    </location>
    <ligand>
        <name>Zn(2+)</name>
        <dbReference type="ChEBI" id="CHEBI:29105"/>
    </ligand>
</feature>
<feature type="binding site" evidence="1">
    <location>
        <position position="424"/>
    </location>
    <ligand>
        <name>Zn(2+)</name>
        <dbReference type="ChEBI" id="CHEBI:29105"/>
    </ligand>
</feature>
<protein>
    <recommendedName>
        <fullName evidence="1">DNA ligase</fullName>
        <ecNumber evidence="1">6.5.1.2</ecNumber>
    </recommendedName>
    <alternativeName>
        <fullName evidence="1">Polydeoxyribonucleotide synthase [NAD(+)]</fullName>
    </alternativeName>
</protein>
<name>DNLJ_STACT</name>
<gene>
    <name evidence="1" type="primary">ligA</name>
    <name type="ordered locus">Sca_1477</name>
</gene>
<accession>B9DMU3</accession>
<dbReference type="EC" id="6.5.1.2" evidence="1"/>
<dbReference type="EMBL" id="AM295250">
    <property type="protein sequence ID" value="CAL28382.1"/>
    <property type="molecule type" value="Genomic_DNA"/>
</dbReference>
<dbReference type="RefSeq" id="WP_015900722.1">
    <property type="nucleotide sequence ID" value="NC_012121.1"/>
</dbReference>
<dbReference type="SMR" id="B9DMU3"/>
<dbReference type="GeneID" id="93793932"/>
<dbReference type="KEGG" id="sca:SCA_1477"/>
<dbReference type="eggNOG" id="COG0272">
    <property type="taxonomic scope" value="Bacteria"/>
</dbReference>
<dbReference type="HOGENOM" id="CLU_007764_2_1_9"/>
<dbReference type="OrthoDB" id="9759736at2"/>
<dbReference type="BioCyc" id="SCAR396513:SCA_RS07510-MONOMER"/>
<dbReference type="Proteomes" id="UP000000444">
    <property type="component" value="Chromosome"/>
</dbReference>
<dbReference type="GO" id="GO:0005829">
    <property type="term" value="C:cytosol"/>
    <property type="evidence" value="ECO:0007669"/>
    <property type="project" value="TreeGrafter"/>
</dbReference>
<dbReference type="GO" id="GO:0003677">
    <property type="term" value="F:DNA binding"/>
    <property type="evidence" value="ECO:0007669"/>
    <property type="project" value="InterPro"/>
</dbReference>
<dbReference type="GO" id="GO:0003911">
    <property type="term" value="F:DNA ligase (NAD+) activity"/>
    <property type="evidence" value="ECO:0007669"/>
    <property type="project" value="UniProtKB-UniRule"/>
</dbReference>
<dbReference type="GO" id="GO:0046872">
    <property type="term" value="F:metal ion binding"/>
    <property type="evidence" value="ECO:0007669"/>
    <property type="project" value="UniProtKB-KW"/>
</dbReference>
<dbReference type="GO" id="GO:0006281">
    <property type="term" value="P:DNA repair"/>
    <property type="evidence" value="ECO:0007669"/>
    <property type="project" value="UniProtKB-KW"/>
</dbReference>
<dbReference type="GO" id="GO:0006260">
    <property type="term" value="P:DNA replication"/>
    <property type="evidence" value="ECO:0007669"/>
    <property type="project" value="UniProtKB-KW"/>
</dbReference>
<dbReference type="CDD" id="cd17748">
    <property type="entry name" value="BRCT_DNA_ligase_like"/>
    <property type="match status" value="1"/>
</dbReference>
<dbReference type="CDD" id="cd00114">
    <property type="entry name" value="LIGANc"/>
    <property type="match status" value="1"/>
</dbReference>
<dbReference type="FunFam" id="1.10.150.20:FF:000006">
    <property type="entry name" value="DNA ligase"/>
    <property type="match status" value="1"/>
</dbReference>
<dbReference type="FunFam" id="1.10.150.20:FF:000007">
    <property type="entry name" value="DNA ligase"/>
    <property type="match status" value="1"/>
</dbReference>
<dbReference type="FunFam" id="1.10.287.610:FF:000002">
    <property type="entry name" value="DNA ligase"/>
    <property type="match status" value="1"/>
</dbReference>
<dbReference type="FunFam" id="2.40.50.140:FF:000012">
    <property type="entry name" value="DNA ligase"/>
    <property type="match status" value="1"/>
</dbReference>
<dbReference type="FunFam" id="3.30.470.30:FF:000001">
    <property type="entry name" value="DNA ligase"/>
    <property type="match status" value="1"/>
</dbReference>
<dbReference type="FunFam" id="6.20.10.30:FF:000002">
    <property type="entry name" value="DNA ligase"/>
    <property type="match status" value="1"/>
</dbReference>
<dbReference type="Gene3D" id="6.20.10.30">
    <property type="match status" value="1"/>
</dbReference>
<dbReference type="Gene3D" id="1.10.150.20">
    <property type="entry name" value="5' to 3' exonuclease, C-terminal subdomain"/>
    <property type="match status" value="2"/>
</dbReference>
<dbReference type="Gene3D" id="3.40.50.10190">
    <property type="entry name" value="BRCT domain"/>
    <property type="match status" value="1"/>
</dbReference>
<dbReference type="Gene3D" id="3.30.470.30">
    <property type="entry name" value="DNA ligase/mRNA capping enzyme"/>
    <property type="match status" value="1"/>
</dbReference>
<dbReference type="Gene3D" id="1.10.287.610">
    <property type="entry name" value="Helix hairpin bin"/>
    <property type="match status" value="1"/>
</dbReference>
<dbReference type="Gene3D" id="2.40.50.140">
    <property type="entry name" value="Nucleic acid-binding proteins"/>
    <property type="match status" value="1"/>
</dbReference>
<dbReference type="HAMAP" id="MF_01588">
    <property type="entry name" value="DNA_ligase_A"/>
    <property type="match status" value="1"/>
</dbReference>
<dbReference type="InterPro" id="IPR001357">
    <property type="entry name" value="BRCT_dom"/>
</dbReference>
<dbReference type="InterPro" id="IPR036420">
    <property type="entry name" value="BRCT_dom_sf"/>
</dbReference>
<dbReference type="InterPro" id="IPR041663">
    <property type="entry name" value="DisA/LigA_HHH"/>
</dbReference>
<dbReference type="InterPro" id="IPR001679">
    <property type="entry name" value="DNA_ligase"/>
</dbReference>
<dbReference type="InterPro" id="IPR018239">
    <property type="entry name" value="DNA_ligase_AS"/>
</dbReference>
<dbReference type="InterPro" id="IPR033136">
    <property type="entry name" value="DNA_ligase_CS"/>
</dbReference>
<dbReference type="InterPro" id="IPR013839">
    <property type="entry name" value="DNAligase_adenylation"/>
</dbReference>
<dbReference type="InterPro" id="IPR013840">
    <property type="entry name" value="DNAligase_N"/>
</dbReference>
<dbReference type="InterPro" id="IPR003583">
    <property type="entry name" value="Hlx-hairpin-Hlx_DNA-bd_motif"/>
</dbReference>
<dbReference type="InterPro" id="IPR012340">
    <property type="entry name" value="NA-bd_OB-fold"/>
</dbReference>
<dbReference type="InterPro" id="IPR004150">
    <property type="entry name" value="NAD_DNA_ligase_OB"/>
</dbReference>
<dbReference type="InterPro" id="IPR010994">
    <property type="entry name" value="RuvA_2-like"/>
</dbReference>
<dbReference type="InterPro" id="IPR004149">
    <property type="entry name" value="Znf_DNAligase_C4"/>
</dbReference>
<dbReference type="NCBIfam" id="TIGR00575">
    <property type="entry name" value="dnlj"/>
    <property type="match status" value="1"/>
</dbReference>
<dbReference type="NCBIfam" id="NF005932">
    <property type="entry name" value="PRK07956.1"/>
    <property type="match status" value="1"/>
</dbReference>
<dbReference type="PANTHER" id="PTHR23389">
    <property type="entry name" value="CHROMOSOME TRANSMISSION FIDELITY FACTOR 18"/>
    <property type="match status" value="1"/>
</dbReference>
<dbReference type="PANTHER" id="PTHR23389:SF9">
    <property type="entry name" value="DNA LIGASE"/>
    <property type="match status" value="1"/>
</dbReference>
<dbReference type="Pfam" id="PF00533">
    <property type="entry name" value="BRCT"/>
    <property type="match status" value="1"/>
</dbReference>
<dbReference type="Pfam" id="PF01653">
    <property type="entry name" value="DNA_ligase_aden"/>
    <property type="match status" value="1"/>
</dbReference>
<dbReference type="Pfam" id="PF03120">
    <property type="entry name" value="DNA_ligase_OB"/>
    <property type="match status" value="1"/>
</dbReference>
<dbReference type="Pfam" id="PF03119">
    <property type="entry name" value="DNA_ligase_ZBD"/>
    <property type="match status" value="1"/>
</dbReference>
<dbReference type="Pfam" id="PF12826">
    <property type="entry name" value="HHH_2"/>
    <property type="match status" value="1"/>
</dbReference>
<dbReference type="Pfam" id="PF14520">
    <property type="entry name" value="HHH_5"/>
    <property type="match status" value="1"/>
</dbReference>
<dbReference type="PIRSF" id="PIRSF001604">
    <property type="entry name" value="LigA"/>
    <property type="match status" value="1"/>
</dbReference>
<dbReference type="SMART" id="SM00292">
    <property type="entry name" value="BRCT"/>
    <property type="match status" value="1"/>
</dbReference>
<dbReference type="SMART" id="SM00278">
    <property type="entry name" value="HhH1"/>
    <property type="match status" value="3"/>
</dbReference>
<dbReference type="SMART" id="SM00532">
    <property type="entry name" value="LIGANc"/>
    <property type="match status" value="1"/>
</dbReference>
<dbReference type="SUPFAM" id="SSF52113">
    <property type="entry name" value="BRCT domain"/>
    <property type="match status" value="1"/>
</dbReference>
<dbReference type="SUPFAM" id="SSF56091">
    <property type="entry name" value="DNA ligase/mRNA capping enzyme, catalytic domain"/>
    <property type="match status" value="1"/>
</dbReference>
<dbReference type="SUPFAM" id="SSF50249">
    <property type="entry name" value="Nucleic acid-binding proteins"/>
    <property type="match status" value="1"/>
</dbReference>
<dbReference type="SUPFAM" id="SSF47781">
    <property type="entry name" value="RuvA domain 2-like"/>
    <property type="match status" value="1"/>
</dbReference>
<dbReference type="PROSITE" id="PS50172">
    <property type="entry name" value="BRCT"/>
    <property type="match status" value="1"/>
</dbReference>
<dbReference type="PROSITE" id="PS01055">
    <property type="entry name" value="DNA_LIGASE_N1"/>
    <property type="match status" value="1"/>
</dbReference>
<dbReference type="PROSITE" id="PS01056">
    <property type="entry name" value="DNA_LIGASE_N2"/>
    <property type="match status" value="1"/>
</dbReference>